<reference key="1">
    <citation type="journal article" date="2008" name="Appl. Environ. Microbiol.">
        <title>The genome sequence of the metal-mobilizing, extremely thermoacidophilic archaeon Metallosphaera sedula provides insights into bioleaching-associated metabolism.</title>
        <authorList>
            <person name="Auernik K.S."/>
            <person name="Maezato Y."/>
            <person name="Blum P.H."/>
            <person name="Kelly R.M."/>
        </authorList>
    </citation>
    <scope>NUCLEOTIDE SEQUENCE [LARGE SCALE GENOMIC DNA]</scope>
    <source>
        <strain>ATCC 51363 / DSM 5348 / JCM 9185 / NBRC 15509 / TH2</strain>
    </source>
</reference>
<accession>A4YH38</accession>
<keyword id="KW-0030">Aminoacyl-tRNA synthetase</keyword>
<keyword id="KW-0067">ATP-binding</keyword>
<keyword id="KW-0963">Cytoplasm</keyword>
<keyword id="KW-0436">Ligase</keyword>
<keyword id="KW-0479">Metal-binding</keyword>
<keyword id="KW-0547">Nucleotide-binding</keyword>
<keyword id="KW-0648">Protein biosynthesis</keyword>
<keyword id="KW-1185">Reference proteome</keyword>
<keyword id="KW-0694">RNA-binding</keyword>
<keyword id="KW-0820">tRNA-binding</keyword>
<keyword id="KW-0862">Zinc</keyword>
<name>SYTC_METS5</name>
<evidence type="ECO:0000250" key="1">
    <source>
        <dbReference type="UniProtKB" id="Q97VW8"/>
    </source>
</evidence>
<evidence type="ECO:0000250" key="2">
    <source>
        <dbReference type="UniProtKB" id="Q9YDW0"/>
    </source>
</evidence>
<evidence type="ECO:0000255" key="3">
    <source>
        <dbReference type="HAMAP-Rule" id="MF_00184"/>
    </source>
</evidence>
<evidence type="ECO:0000305" key="4"/>
<feature type="chain" id="PRO_1000071677" description="Threonine--tRNA ligase catalytic subunit">
    <location>
        <begin position="1"/>
        <end position="541"/>
    </location>
</feature>
<feature type="region of interest" description="Catalytic" evidence="3">
    <location>
        <begin position="135"/>
        <end position="429"/>
    </location>
</feature>
<feature type="binding site" evidence="3">
    <location>
        <position position="227"/>
    </location>
    <ligand>
        <name>Zn(2+)</name>
        <dbReference type="ChEBI" id="CHEBI:29105"/>
    </ligand>
</feature>
<feature type="binding site" evidence="3">
    <location>
        <position position="278"/>
    </location>
    <ligand>
        <name>Zn(2+)</name>
        <dbReference type="ChEBI" id="CHEBI:29105"/>
    </ligand>
</feature>
<feature type="binding site" evidence="3">
    <location>
        <position position="406"/>
    </location>
    <ligand>
        <name>Zn(2+)</name>
        <dbReference type="ChEBI" id="CHEBI:29105"/>
    </ligand>
</feature>
<proteinExistence type="inferred from homology"/>
<organism>
    <name type="scientific">Metallosphaera sedula (strain ATCC 51363 / DSM 5348 / JCM 9185 / NBRC 15509 / TH2)</name>
    <dbReference type="NCBI Taxonomy" id="399549"/>
    <lineage>
        <taxon>Archaea</taxon>
        <taxon>Thermoproteota</taxon>
        <taxon>Thermoprotei</taxon>
        <taxon>Sulfolobales</taxon>
        <taxon>Sulfolobaceae</taxon>
        <taxon>Metallosphaera</taxon>
    </lineage>
</organism>
<protein>
    <recommendedName>
        <fullName>Threonine--tRNA ligase catalytic subunit</fullName>
        <ecNumber evidence="3">6.1.1.3</ecNumber>
    </recommendedName>
    <alternativeName>
        <fullName>Threonyl-tRNA synthetase catalytic subunit</fullName>
        <shortName>ThrRS-cat</shortName>
    </alternativeName>
</protein>
<sequence>MESYRGLWLKGAIVMALNMYEAGLTPVEIGLGERDFYIDVQSDSALSLQESEKFAQWKDHKYEIKDGKVTYNGKQILLQGDVTPSGEPRYFKVLNISVHHPSANVQLVRIRGIAFETKEQMDDYLQWLEKASETDHRIIGERMDLFSFHEESGPGLVLFHPKGQLIRNEMINYMREINASMGYQEVYTSHVFRTVLWKISGHYDTYRDKMLIFQKDDDELGIKPMNCPAHILIYKSRVRSYRDLPIRFSEFGNVYRWEKKGELYGLLRTRGFTQDDGHIFLREDQLKDEVKNLVRKTLDVLGKFGFKGEDVRINLSTRPDESIGSDEQWEKATKALLDVLKELNVPYVVKEKEGAFYGPKIDFDIRDSLNRWWQLSTIQVDFNLPERFKLEYVDEDGSKKRPVMVHRAIYGSLDRMIAILLEHFRGKLPTWLSPVQVRVLPISEDNLDYAKRVMDVLVQRGIRTEIDPSGETLSKRIKRGYDDGVPYLVIVGRKEASEEKVTIRARGNVEIKGVPLSRFVDELSLEIGNRDAENTLIKRIG</sequence>
<gene>
    <name evidence="4" type="primary">thrS-cat</name>
    <name evidence="3" type="synonym">thrS</name>
    <name type="ordered locus">Msed_1585</name>
</gene>
<dbReference type="EC" id="6.1.1.3" evidence="3"/>
<dbReference type="EMBL" id="CP000682">
    <property type="protein sequence ID" value="ABP95740.1"/>
    <property type="molecule type" value="Genomic_DNA"/>
</dbReference>
<dbReference type="RefSeq" id="WP_012021527.1">
    <property type="nucleotide sequence ID" value="NC_009440.1"/>
</dbReference>
<dbReference type="SMR" id="A4YH38"/>
<dbReference type="STRING" id="399549.Msed_1585"/>
<dbReference type="GeneID" id="91756086"/>
<dbReference type="KEGG" id="mse:Msed_1585"/>
<dbReference type="eggNOG" id="arCOG00401">
    <property type="taxonomic scope" value="Archaea"/>
</dbReference>
<dbReference type="HOGENOM" id="CLU_008554_2_2_2"/>
<dbReference type="Proteomes" id="UP000000242">
    <property type="component" value="Chromosome"/>
</dbReference>
<dbReference type="GO" id="GO:0005737">
    <property type="term" value="C:cytoplasm"/>
    <property type="evidence" value="ECO:0007669"/>
    <property type="project" value="UniProtKB-SubCell"/>
</dbReference>
<dbReference type="GO" id="GO:0005524">
    <property type="term" value="F:ATP binding"/>
    <property type="evidence" value="ECO:0007669"/>
    <property type="project" value="UniProtKB-UniRule"/>
</dbReference>
<dbReference type="GO" id="GO:0046872">
    <property type="term" value="F:metal ion binding"/>
    <property type="evidence" value="ECO:0007669"/>
    <property type="project" value="UniProtKB-KW"/>
</dbReference>
<dbReference type="GO" id="GO:0004829">
    <property type="term" value="F:threonine-tRNA ligase activity"/>
    <property type="evidence" value="ECO:0007669"/>
    <property type="project" value="UniProtKB-UniRule"/>
</dbReference>
<dbReference type="GO" id="GO:0000049">
    <property type="term" value="F:tRNA binding"/>
    <property type="evidence" value="ECO:0007669"/>
    <property type="project" value="UniProtKB-KW"/>
</dbReference>
<dbReference type="GO" id="GO:0006435">
    <property type="term" value="P:threonyl-tRNA aminoacylation"/>
    <property type="evidence" value="ECO:0007669"/>
    <property type="project" value="UniProtKB-UniRule"/>
</dbReference>
<dbReference type="CDD" id="cd00860">
    <property type="entry name" value="ThrRS_anticodon"/>
    <property type="match status" value="1"/>
</dbReference>
<dbReference type="CDD" id="cd00771">
    <property type="entry name" value="ThrRS_core"/>
    <property type="match status" value="1"/>
</dbReference>
<dbReference type="FunFam" id="3.30.930.10:FF:000002">
    <property type="entry name" value="Threonine--tRNA ligase"/>
    <property type="match status" value="1"/>
</dbReference>
<dbReference type="FunFam" id="3.40.50.800:FF:000001">
    <property type="entry name" value="Threonine--tRNA ligase"/>
    <property type="match status" value="1"/>
</dbReference>
<dbReference type="Gene3D" id="3.40.50.800">
    <property type="entry name" value="Anticodon-binding domain"/>
    <property type="match status" value="1"/>
</dbReference>
<dbReference type="Gene3D" id="3.30.930.10">
    <property type="entry name" value="Bira Bifunctional Protein, Domain 2"/>
    <property type="match status" value="1"/>
</dbReference>
<dbReference type="HAMAP" id="MF_00184">
    <property type="entry name" value="Thr_tRNA_synth"/>
    <property type="match status" value="1"/>
</dbReference>
<dbReference type="InterPro" id="IPR002314">
    <property type="entry name" value="aa-tRNA-synt_IIb"/>
</dbReference>
<dbReference type="InterPro" id="IPR006195">
    <property type="entry name" value="aa-tRNA-synth_II"/>
</dbReference>
<dbReference type="InterPro" id="IPR045864">
    <property type="entry name" value="aa-tRNA-synth_II/BPL/LPL"/>
</dbReference>
<dbReference type="InterPro" id="IPR004154">
    <property type="entry name" value="Anticodon-bd"/>
</dbReference>
<dbReference type="InterPro" id="IPR036621">
    <property type="entry name" value="Anticodon-bd_dom_sf"/>
</dbReference>
<dbReference type="InterPro" id="IPR002320">
    <property type="entry name" value="Thr-tRNA-ligase_IIa"/>
</dbReference>
<dbReference type="InterPro" id="IPR018163">
    <property type="entry name" value="Thr/Ala-tRNA-synth_IIc_edit"/>
</dbReference>
<dbReference type="InterPro" id="IPR047246">
    <property type="entry name" value="ThrRS_anticodon"/>
</dbReference>
<dbReference type="InterPro" id="IPR033728">
    <property type="entry name" value="ThrRS_core"/>
</dbReference>
<dbReference type="NCBIfam" id="TIGR00418">
    <property type="entry name" value="thrS"/>
    <property type="match status" value="1"/>
</dbReference>
<dbReference type="PANTHER" id="PTHR11451:SF44">
    <property type="entry name" value="THREONINE--TRNA LIGASE, CHLOROPLASTIC_MITOCHONDRIAL 2"/>
    <property type="match status" value="1"/>
</dbReference>
<dbReference type="PANTHER" id="PTHR11451">
    <property type="entry name" value="THREONINE-TRNA LIGASE"/>
    <property type="match status" value="1"/>
</dbReference>
<dbReference type="Pfam" id="PF03129">
    <property type="entry name" value="HGTP_anticodon"/>
    <property type="match status" value="1"/>
</dbReference>
<dbReference type="Pfam" id="PF00587">
    <property type="entry name" value="tRNA-synt_2b"/>
    <property type="match status" value="1"/>
</dbReference>
<dbReference type="PRINTS" id="PR01047">
    <property type="entry name" value="TRNASYNTHTHR"/>
</dbReference>
<dbReference type="SUPFAM" id="SSF52954">
    <property type="entry name" value="Class II aaRS ABD-related"/>
    <property type="match status" value="1"/>
</dbReference>
<dbReference type="SUPFAM" id="SSF55681">
    <property type="entry name" value="Class II aaRS and biotin synthetases"/>
    <property type="match status" value="1"/>
</dbReference>
<dbReference type="SUPFAM" id="SSF55186">
    <property type="entry name" value="ThrRS/AlaRS common domain"/>
    <property type="match status" value="1"/>
</dbReference>
<dbReference type="PROSITE" id="PS50862">
    <property type="entry name" value="AA_TRNA_LIGASE_II"/>
    <property type="match status" value="1"/>
</dbReference>
<comment type="function">
    <text evidence="1">Catalyzes the attachment of threonine to tRNA(Thr) in a two-step reaction: L-threonine is first activated by ATP to form Thr-AMP and then transferred to the acceptor end of tRNA(Thr). Also activates L-serine and transfers it to tRNA(Thr) but cannot deacylate incorrectly charged amino acid; unlike most archaea the editing function is found in a freestanding protein.</text>
</comment>
<comment type="catalytic activity">
    <reaction evidence="3">
        <text>tRNA(Thr) + L-threonine + ATP = L-threonyl-tRNA(Thr) + AMP + diphosphate + H(+)</text>
        <dbReference type="Rhea" id="RHEA:24624"/>
        <dbReference type="Rhea" id="RHEA-COMP:9670"/>
        <dbReference type="Rhea" id="RHEA-COMP:9704"/>
        <dbReference type="ChEBI" id="CHEBI:15378"/>
        <dbReference type="ChEBI" id="CHEBI:30616"/>
        <dbReference type="ChEBI" id="CHEBI:33019"/>
        <dbReference type="ChEBI" id="CHEBI:57926"/>
        <dbReference type="ChEBI" id="CHEBI:78442"/>
        <dbReference type="ChEBI" id="CHEBI:78534"/>
        <dbReference type="ChEBI" id="CHEBI:456215"/>
        <dbReference type="EC" id="6.1.1.3"/>
    </reaction>
</comment>
<comment type="cofactor">
    <cofactor evidence="3">
        <name>Zn(2+)</name>
        <dbReference type="ChEBI" id="CHEBI:29105"/>
    </cofactor>
    <text evidence="3">Binds 1 zinc ion per subunit.</text>
</comment>
<comment type="subunit">
    <text evidence="1 2">Homodimer (By similarity). Probably interacts with its editing subunit (By similarity).</text>
</comment>
<comment type="subcellular location">
    <subcellularLocation>
        <location evidence="3">Cytoplasm</location>
    </subcellularLocation>
</comment>
<comment type="similarity">
    <text evidence="3">Belongs to the class-II aminoacyl-tRNA synthetase family.</text>
</comment>